<feature type="chain" id="PRO_1000193618" description="Gamma-glutamyl phosphate reductase">
    <location>
        <begin position="1"/>
        <end position="420"/>
    </location>
</feature>
<keyword id="KW-0028">Amino-acid biosynthesis</keyword>
<keyword id="KW-0963">Cytoplasm</keyword>
<keyword id="KW-0521">NADP</keyword>
<keyword id="KW-0560">Oxidoreductase</keyword>
<keyword id="KW-0641">Proline biosynthesis</keyword>
<keyword id="KW-1185">Reference proteome</keyword>
<reference key="1">
    <citation type="journal article" date="2009" name="PLoS Genet.">
        <title>The complete genome and proteome of Laribacter hongkongensis reveal potential mechanisms for adaptations to different temperatures and habitats.</title>
        <authorList>
            <person name="Woo P.C.Y."/>
            <person name="Lau S.K.P."/>
            <person name="Tse H."/>
            <person name="Teng J.L.L."/>
            <person name="Curreem S.O."/>
            <person name="Tsang A.K.L."/>
            <person name="Fan R.Y.Y."/>
            <person name="Wong G.K.M."/>
            <person name="Huang Y."/>
            <person name="Loman N.J."/>
            <person name="Snyder L.A.S."/>
            <person name="Cai J.J."/>
            <person name="Huang J.-D."/>
            <person name="Mak W."/>
            <person name="Pallen M.J."/>
            <person name="Lok S."/>
            <person name="Yuen K.-Y."/>
        </authorList>
    </citation>
    <scope>NUCLEOTIDE SEQUENCE [LARGE SCALE GENOMIC DNA]</scope>
    <source>
        <strain>HLHK9</strain>
    </source>
</reference>
<organism>
    <name type="scientific">Laribacter hongkongensis (strain HLHK9)</name>
    <dbReference type="NCBI Taxonomy" id="557598"/>
    <lineage>
        <taxon>Bacteria</taxon>
        <taxon>Pseudomonadati</taxon>
        <taxon>Pseudomonadota</taxon>
        <taxon>Betaproteobacteria</taxon>
        <taxon>Neisseriales</taxon>
        <taxon>Aquaspirillaceae</taxon>
        <taxon>Laribacter</taxon>
    </lineage>
</organism>
<evidence type="ECO:0000255" key="1">
    <source>
        <dbReference type="HAMAP-Rule" id="MF_00412"/>
    </source>
</evidence>
<name>PROA_LARHH</name>
<dbReference type="EC" id="1.2.1.41" evidence="1"/>
<dbReference type="EMBL" id="CP001154">
    <property type="protein sequence ID" value="ACO76179.1"/>
    <property type="molecule type" value="Genomic_DNA"/>
</dbReference>
<dbReference type="RefSeq" id="WP_012698642.1">
    <property type="nucleotide sequence ID" value="NC_012559.1"/>
</dbReference>
<dbReference type="SMR" id="C1D6E4"/>
<dbReference type="STRING" id="557598.LHK_03201"/>
<dbReference type="KEGG" id="lhk:LHK_03201"/>
<dbReference type="eggNOG" id="COG0014">
    <property type="taxonomic scope" value="Bacteria"/>
</dbReference>
<dbReference type="HOGENOM" id="CLU_030231_0_0_4"/>
<dbReference type="UniPathway" id="UPA00098">
    <property type="reaction ID" value="UER00360"/>
</dbReference>
<dbReference type="Proteomes" id="UP000002010">
    <property type="component" value="Chromosome"/>
</dbReference>
<dbReference type="GO" id="GO:0005737">
    <property type="term" value="C:cytoplasm"/>
    <property type="evidence" value="ECO:0007669"/>
    <property type="project" value="UniProtKB-SubCell"/>
</dbReference>
<dbReference type="GO" id="GO:0004350">
    <property type="term" value="F:glutamate-5-semialdehyde dehydrogenase activity"/>
    <property type="evidence" value="ECO:0007669"/>
    <property type="project" value="UniProtKB-UniRule"/>
</dbReference>
<dbReference type="GO" id="GO:0050661">
    <property type="term" value="F:NADP binding"/>
    <property type="evidence" value="ECO:0007669"/>
    <property type="project" value="InterPro"/>
</dbReference>
<dbReference type="GO" id="GO:0055129">
    <property type="term" value="P:L-proline biosynthetic process"/>
    <property type="evidence" value="ECO:0007669"/>
    <property type="project" value="UniProtKB-UniRule"/>
</dbReference>
<dbReference type="CDD" id="cd07079">
    <property type="entry name" value="ALDH_F18-19_ProA-GPR"/>
    <property type="match status" value="1"/>
</dbReference>
<dbReference type="FunFam" id="3.40.309.10:FF:000006">
    <property type="entry name" value="Gamma-glutamyl phosphate reductase"/>
    <property type="match status" value="1"/>
</dbReference>
<dbReference type="Gene3D" id="3.40.605.10">
    <property type="entry name" value="Aldehyde Dehydrogenase, Chain A, domain 1"/>
    <property type="match status" value="1"/>
</dbReference>
<dbReference type="Gene3D" id="3.40.309.10">
    <property type="entry name" value="Aldehyde Dehydrogenase, Chain A, domain 2"/>
    <property type="match status" value="1"/>
</dbReference>
<dbReference type="HAMAP" id="MF_00412">
    <property type="entry name" value="ProA"/>
    <property type="match status" value="1"/>
</dbReference>
<dbReference type="InterPro" id="IPR016161">
    <property type="entry name" value="Ald_DH/histidinol_DH"/>
</dbReference>
<dbReference type="InterPro" id="IPR016163">
    <property type="entry name" value="Ald_DH_C"/>
</dbReference>
<dbReference type="InterPro" id="IPR016162">
    <property type="entry name" value="Ald_DH_N"/>
</dbReference>
<dbReference type="InterPro" id="IPR015590">
    <property type="entry name" value="Aldehyde_DH_dom"/>
</dbReference>
<dbReference type="InterPro" id="IPR012134">
    <property type="entry name" value="Glu-5-SA_DH"/>
</dbReference>
<dbReference type="InterPro" id="IPR000965">
    <property type="entry name" value="GPR_dom"/>
</dbReference>
<dbReference type="NCBIfam" id="NF001221">
    <property type="entry name" value="PRK00197.1"/>
    <property type="match status" value="1"/>
</dbReference>
<dbReference type="NCBIfam" id="TIGR00407">
    <property type="entry name" value="proA"/>
    <property type="match status" value="1"/>
</dbReference>
<dbReference type="PANTHER" id="PTHR11063:SF8">
    <property type="entry name" value="DELTA-1-PYRROLINE-5-CARBOXYLATE SYNTHASE"/>
    <property type="match status" value="1"/>
</dbReference>
<dbReference type="PANTHER" id="PTHR11063">
    <property type="entry name" value="GLUTAMATE SEMIALDEHYDE DEHYDROGENASE"/>
    <property type="match status" value="1"/>
</dbReference>
<dbReference type="Pfam" id="PF00171">
    <property type="entry name" value="Aldedh"/>
    <property type="match status" value="1"/>
</dbReference>
<dbReference type="PIRSF" id="PIRSF000151">
    <property type="entry name" value="GPR"/>
    <property type="match status" value="1"/>
</dbReference>
<dbReference type="SUPFAM" id="SSF53720">
    <property type="entry name" value="ALDH-like"/>
    <property type="match status" value="1"/>
</dbReference>
<comment type="function">
    <text evidence="1">Catalyzes the NADPH-dependent reduction of L-glutamate 5-phosphate into L-glutamate 5-semialdehyde and phosphate. The product spontaneously undergoes cyclization to form 1-pyrroline-5-carboxylate.</text>
</comment>
<comment type="catalytic activity">
    <reaction evidence="1">
        <text>L-glutamate 5-semialdehyde + phosphate + NADP(+) = L-glutamyl 5-phosphate + NADPH + H(+)</text>
        <dbReference type="Rhea" id="RHEA:19541"/>
        <dbReference type="ChEBI" id="CHEBI:15378"/>
        <dbReference type="ChEBI" id="CHEBI:43474"/>
        <dbReference type="ChEBI" id="CHEBI:57783"/>
        <dbReference type="ChEBI" id="CHEBI:58066"/>
        <dbReference type="ChEBI" id="CHEBI:58274"/>
        <dbReference type="ChEBI" id="CHEBI:58349"/>
        <dbReference type="EC" id="1.2.1.41"/>
    </reaction>
</comment>
<comment type="pathway">
    <text evidence="1">Amino-acid biosynthesis; L-proline biosynthesis; L-glutamate 5-semialdehyde from L-glutamate: step 2/2.</text>
</comment>
<comment type="subcellular location">
    <subcellularLocation>
        <location evidence="1">Cytoplasm</location>
    </subcellularLocation>
</comment>
<comment type="similarity">
    <text evidence="1">Belongs to the gamma-glutamyl phosphate reductase family.</text>
</comment>
<accession>C1D6E4</accession>
<proteinExistence type="inferred from homology"/>
<gene>
    <name evidence="1" type="primary">proA</name>
    <name type="ordered locus">LHK_03201</name>
</gene>
<protein>
    <recommendedName>
        <fullName evidence="1">Gamma-glutamyl phosphate reductase</fullName>
        <shortName evidence="1">GPR</shortName>
        <ecNumber evidence="1">1.2.1.41</ecNumber>
    </recommendedName>
    <alternativeName>
        <fullName evidence="1">Glutamate-5-semialdehyde dehydrogenase</fullName>
    </alternativeName>
    <alternativeName>
        <fullName evidence="1">Glutamyl-gamma-semialdehyde dehydrogenase</fullName>
        <shortName evidence="1">GSA dehydrogenase</shortName>
    </alternativeName>
</protein>
<sequence length="420" mass="44547">MDLHSYMQDLGRAARAASRELARADTRTKNAALLAMADAIERDAAKLLAANADDVKAAVAAGLAPAMVDRLTLTEKTVAGMAEGLRQIASLPDPVGEMGEFAYRPSGIQLGKMRVPLGVIGIIYEARPNVTADAAGLCLKAGNACILRGGSEAFRSNQAIAACVHEGLAAASLPTAAVQVLETTDRAAVGLLITMPEYVDVIVPRGGKGLIARISAEARVPVIKHLDGNCHTYVDVDADLEKALPVCDNAKTQRYGTCNTMETLLVHEVVAEAFLPAICQVYLDKGVELRGCATTRALIGADKVQPATEEDWLTEYAAPILAIKVIDSLDTAISHINHYGSHHTDVIITENYSSARRFLREVDSSSVMVNASSRFADGFEYGLGAEIGISTDKIHARGPVGLKGLTSEKWIVFGDGQVRG</sequence>